<feature type="chain" id="PRO_0000168231" description="Dihydropteroate synthase">
    <location>
        <begin position="1"/>
        <end position="314"/>
    </location>
</feature>
<feature type="domain" description="Pterin-binding" evidence="3">
    <location>
        <begin position="10"/>
        <end position="294"/>
    </location>
</feature>
<feature type="binding site" evidence="1">
    <location>
        <position position="17"/>
    </location>
    <ligand>
        <name>Mg(2+)</name>
        <dbReference type="ChEBI" id="CHEBI:18420"/>
    </ligand>
</feature>
<feature type="binding site" evidence="9">
    <location>
        <position position="91"/>
    </location>
    <ligand>
        <name>(7,8-dihydropterin-6-yl)methyl diphosphate</name>
        <dbReference type="ChEBI" id="CHEBI:72950"/>
    </ligand>
</feature>
<feature type="binding site" evidence="9 10">
    <location>
        <position position="110"/>
    </location>
    <ligand>
        <name>(7,8-dihydropterin-6-yl)methyl diphosphate</name>
        <dbReference type="ChEBI" id="CHEBI:72950"/>
    </ligand>
</feature>
<feature type="binding site" evidence="9 10">
    <location>
        <position position="201"/>
    </location>
    <ligand>
        <name>(7,8-dihydropterin-6-yl)methyl diphosphate</name>
        <dbReference type="ChEBI" id="CHEBI:72950"/>
    </ligand>
</feature>
<feature type="binding site" evidence="9 10">
    <location>
        <position position="237"/>
    </location>
    <ligand>
        <name>(7,8-dihydropterin-6-yl)methyl diphosphate</name>
        <dbReference type="ChEBI" id="CHEBI:72950"/>
    </ligand>
</feature>
<feature type="binding site" evidence="9 10">
    <location>
        <begin position="282"/>
        <end position="284"/>
    </location>
    <ligand>
        <name>(7,8-dihydropterin-6-yl)methyl diphosphate</name>
        <dbReference type="ChEBI" id="CHEBI:72950"/>
    </ligand>
</feature>
<feature type="strand" evidence="11">
    <location>
        <begin position="11"/>
        <end position="17"/>
    </location>
</feature>
<feature type="helix" evidence="11">
    <location>
        <begin position="31"/>
        <end position="44"/>
    </location>
</feature>
<feature type="strand" evidence="11">
    <location>
        <begin position="48"/>
        <end position="53"/>
    </location>
</feature>
<feature type="helix" evidence="11">
    <location>
        <begin position="63"/>
        <end position="83"/>
    </location>
</feature>
<feature type="strand" evidence="11">
    <location>
        <begin position="87"/>
        <end position="91"/>
    </location>
</feature>
<feature type="helix" evidence="11">
    <location>
        <begin position="95"/>
        <end position="103"/>
    </location>
</feature>
<feature type="strand" evidence="11">
    <location>
        <begin position="108"/>
        <end position="111"/>
    </location>
</feature>
<feature type="turn" evidence="11">
    <location>
        <begin position="112"/>
        <end position="115"/>
    </location>
</feature>
<feature type="helix" evidence="11">
    <location>
        <begin position="121"/>
        <end position="128"/>
    </location>
</feature>
<feature type="strand" evidence="11">
    <location>
        <begin position="131"/>
        <end position="135"/>
    </location>
</feature>
<feature type="helix" evidence="11">
    <location>
        <begin position="138"/>
        <end position="141"/>
    </location>
</feature>
<feature type="turn" evidence="11">
    <location>
        <begin position="146"/>
        <end position="150"/>
    </location>
</feature>
<feature type="helix" evidence="11">
    <location>
        <begin position="166"/>
        <end position="170"/>
    </location>
</feature>
<feature type="helix" evidence="11">
    <location>
        <begin position="173"/>
        <end position="191"/>
    </location>
</feature>
<feature type="helix" evidence="11">
    <location>
        <begin position="195"/>
        <end position="197"/>
    </location>
</feature>
<feature type="strand" evidence="11">
    <location>
        <begin position="198"/>
        <end position="201"/>
    </location>
</feature>
<feature type="helix" evidence="11">
    <location>
        <begin position="210"/>
        <end position="218"/>
    </location>
</feature>
<feature type="helix" evidence="11">
    <location>
        <begin position="220"/>
        <end position="224"/>
    </location>
</feature>
<feature type="turn" evidence="12">
    <location>
        <begin position="225"/>
        <end position="227"/>
    </location>
</feature>
<feature type="strand" evidence="11">
    <location>
        <begin position="230"/>
        <end position="233"/>
    </location>
</feature>
<feature type="helix" evidence="11">
    <location>
        <begin position="238"/>
        <end position="246"/>
    </location>
</feature>
<feature type="helix" evidence="11">
    <location>
        <begin position="256"/>
        <end position="275"/>
    </location>
</feature>
<feature type="strand" evidence="11">
    <location>
        <begin position="279"/>
        <end position="284"/>
    </location>
</feature>
<feature type="helix" evidence="11">
    <location>
        <begin position="286"/>
        <end position="300"/>
    </location>
</feature>
<gene>
    <name type="primary">sulA</name>
    <name type="ordered locus">spr0266</name>
</gene>
<protein>
    <recommendedName>
        <fullName evidence="6">Dihydropteroate synthase</fullName>
        <shortName evidence="6">DHPS</shortName>
        <ecNumber evidence="4">2.5.1.15</ecNumber>
    </recommendedName>
    <alternativeName>
        <fullName>Dihydropteroate pyrophosphorylase</fullName>
    </alternativeName>
</protein>
<reference key="1">
    <citation type="journal article" date="2001" name="J. Bacteriol.">
        <title>Genome of the bacterium Streptococcus pneumoniae strain R6.</title>
        <authorList>
            <person name="Hoskins J."/>
            <person name="Alborn W.E. Jr."/>
            <person name="Arnold J."/>
            <person name="Blaszczak L.C."/>
            <person name="Burgett S."/>
            <person name="DeHoff B.S."/>
            <person name="Estrem S.T."/>
            <person name="Fritz L."/>
            <person name="Fu D.-J."/>
            <person name="Fuller W."/>
            <person name="Geringer C."/>
            <person name="Gilmour R."/>
            <person name="Glass J.S."/>
            <person name="Khoja H."/>
            <person name="Kraft A.R."/>
            <person name="Lagace R.E."/>
            <person name="LeBlanc D.J."/>
            <person name="Lee L.N."/>
            <person name="Lefkowitz E.J."/>
            <person name="Lu J."/>
            <person name="Matsushima P."/>
            <person name="McAhren S.M."/>
            <person name="McHenney M."/>
            <person name="McLeaster K."/>
            <person name="Mundy C.W."/>
            <person name="Nicas T.I."/>
            <person name="Norris F.H."/>
            <person name="O'Gara M."/>
            <person name="Peery R.B."/>
            <person name="Robertson G.T."/>
            <person name="Rockey P."/>
            <person name="Sun P.-M."/>
            <person name="Winkler M.E."/>
            <person name="Yang Y."/>
            <person name="Young-Bellido M."/>
            <person name="Zhao G."/>
            <person name="Zook C.A."/>
            <person name="Baltz R.H."/>
            <person name="Jaskunas S.R."/>
            <person name="Rosteck P.R. Jr."/>
            <person name="Skatrud P.L."/>
            <person name="Glass J.I."/>
        </authorList>
    </citation>
    <scope>NUCLEOTIDE SEQUENCE [LARGE SCALE GENOMIC DNA]</scope>
    <source>
        <strain>ATCC BAA-255 / R6</strain>
    </source>
</reference>
<reference key="2">
    <citation type="journal article" date="1999" name="Biochem. Biophys. Res. Commun.">
        <title>Dihydropteroate synthase from Streptococcus pneumoniae: characterization of substrate binding order and sulfonamide inhibition.</title>
        <authorList>
            <person name="Vinnicombe H.G."/>
            <person name="Derrick J.P."/>
        </authorList>
    </citation>
    <scope>FUNCTION</scope>
    <scope>CATALYTIC ACTIVITY</scope>
    <scope>ACTIVITY REGULATION</scope>
    <scope>REACTION MECHANISM</scope>
</reference>
<reference key="3">
    <citation type="journal article" date="2008" name="Biochem. J.">
        <title>Dihydropteroate synthase from Streptococcus pneumoniae: structure, ligand recognition and mechanism of sulfonamide resistance.</title>
        <authorList>
            <person name="Levy C."/>
            <person name="Minnis D."/>
            <person name="Derrick J.P."/>
        </authorList>
    </citation>
    <scope>X-RAY CRYSTALLOGRAPHY (1.80 ANGSTROMS) OF APOENZYME AND IN COMPLEX WITH 6-HYDROXYMETHYL-7,8-DIHYDROPTERIN MONOPHOSPHATE</scope>
    <scope>SUBUNIT</scope>
    <scope>DRUG RESISTANCE</scope>
</reference>
<keyword id="KW-0002">3D-structure</keyword>
<keyword id="KW-0046">Antibiotic resistance</keyword>
<keyword id="KW-0289">Folate biosynthesis</keyword>
<keyword id="KW-0460">Magnesium</keyword>
<keyword id="KW-0479">Metal-binding</keyword>
<keyword id="KW-1185">Reference proteome</keyword>
<keyword id="KW-0808">Transferase</keyword>
<name>DHPS_STRR6</name>
<evidence type="ECO:0000250" key="1">
    <source>
        <dbReference type="UniProtKB" id="O05701"/>
    </source>
</evidence>
<evidence type="ECO:0000250" key="2">
    <source>
        <dbReference type="UniProtKB" id="P0AC13"/>
    </source>
</evidence>
<evidence type="ECO:0000255" key="3">
    <source>
        <dbReference type="PROSITE-ProRule" id="PRU00334"/>
    </source>
</evidence>
<evidence type="ECO:0000269" key="4">
    <source>
    </source>
</evidence>
<evidence type="ECO:0000269" key="5">
    <source>
    </source>
</evidence>
<evidence type="ECO:0000303" key="6">
    <source>
    </source>
</evidence>
<evidence type="ECO:0000305" key="7"/>
<evidence type="ECO:0000305" key="8">
    <source>
    </source>
</evidence>
<evidence type="ECO:0000305" key="9">
    <source>
    </source>
</evidence>
<evidence type="ECO:0007744" key="10">
    <source>
        <dbReference type="PDB" id="2VEG"/>
    </source>
</evidence>
<evidence type="ECO:0007829" key="11">
    <source>
        <dbReference type="PDB" id="2VEF"/>
    </source>
</evidence>
<evidence type="ECO:0007829" key="12">
    <source>
        <dbReference type="PDB" id="2VEG"/>
    </source>
</evidence>
<accession>P59655</accession>
<proteinExistence type="evidence at protein level"/>
<organism>
    <name type="scientific">Streptococcus pneumoniae (strain ATCC BAA-255 / R6)</name>
    <dbReference type="NCBI Taxonomy" id="171101"/>
    <lineage>
        <taxon>Bacteria</taxon>
        <taxon>Bacillati</taxon>
        <taxon>Bacillota</taxon>
        <taxon>Bacilli</taxon>
        <taxon>Lactobacillales</taxon>
        <taxon>Streptococcaceae</taxon>
        <taxon>Streptococcus</taxon>
    </lineage>
</organism>
<dbReference type="EC" id="2.5.1.15" evidence="4"/>
<dbReference type="EMBL" id="AE007317">
    <property type="protein sequence ID" value="AAK99070.1"/>
    <property type="molecule type" value="Genomic_DNA"/>
</dbReference>
<dbReference type="RefSeq" id="NP_357860.1">
    <property type="nucleotide sequence ID" value="NC_003098.1"/>
</dbReference>
<dbReference type="PDB" id="2VEF">
    <property type="method" value="X-ray"/>
    <property type="resolution" value="1.80 A"/>
    <property type="chains" value="A/B=1-314"/>
</dbReference>
<dbReference type="PDB" id="2VEG">
    <property type="method" value="X-ray"/>
    <property type="resolution" value="2.40 A"/>
    <property type="chains" value="A/B=1-314"/>
</dbReference>
<dbReference type="PDBsum" id="2VEF"/>
<dbReference type="PDBsum" id="2VEG"/>
<dbReference type="SMR" id="P59655"/>
<dbReference type="STRING" id="171101.spr0266"/>
<dbReference type="KEGG" id="spr:spr0266"/>
<dbReference type="PATRIC" id="fig|171101.6.peg.303"/>
<dbReference type="eggNOG" id="COG0294">
    <property type="taxonomic scope" value="Bacteria"/>
</dbReference>
<dbReference type="HOGENOM" id="CLU_008023_0_2_9"/>
<dbReference type="BRENDA" id="2.5.1.15">
    <property type="organism ID" value="1960"/>
</dbReference>
<dbReference type="UniPathway" id="UPA00077">
    <property type="reaction ID" value="UER00156"/>
</dbReference>
<dbReference type="EvolutionaryTrace" id="P59655"/>
<dbReference type="Proteomes" id="UP000000586">
    <property type="component" value="Chromosome"/>
</dbReference>
<dbReference type="GO" id="GO:0005829">
    <property type="term" value="C:cytosol"/>
    <property type="evidence" value="ECO:0000318"/>
    <property type="project" value="GO_Central"/>
</dbReference>
<dbReference type="GO" id="GO:0004156">
    <property type="term" value="F:dihydropteroate synthase activity"/>
    <property type="evidence" value="ECO:0000318"/>
    <property type="project" value="GO_Central"/>
</dbReference>
<dbReference type="GO" id="GO:0046872">
    <property type="term" value="F:metal ion binding"/>
    <property type="evidence" value="ECO:0007669"/>
    <property type="project" value="UniProtKB-KW"/>
</dbReference>
<dbReference type="GO" id="GO:0046656">
    <property type="term" value="P:folic acid biosynthetic process"/>
    <property type="evidence" value="ECO:0007669"/>
    <property type="project" value="UniProtKB-KW"/>
</dbReference>
<dbReference type="GO" id="GO:0046677">
    <property type="term" value="P:response to antibiotic"/>
    <property type="evidence" value="ECO:0007669"/>
    <property type="project" value="UniProtKB-KW"/>
</dbReference>
<dbReference type="GO" id="GO:0046654">
    <property type="term" value="P:tetrahydrofolate biosynthetic process"/>
    <property type="evidence" value="ECO:0000318"/>
    <property type="project" value="GO_Central"/>
</dbReference>
<dbReference type="CDD" id="cd00739">
    <property type="entry name" value="DHPS"/>
    <property type="match status" value="1"/>
</dbReference>
<dbReference type="FunFam" id="3.20.20.20:FF:000012">
    <property type="entry name" value="Dihydropteroate synthase"/>
    <property type="match status" value="1"/>
</dbReference>
<dbReference type="Gene3D" id="3.20.20.20">
    <property type="entry name" value="Dihydropteroate synthase-like"/>
    <property type="match status" value="1"/>
</dbReference>
<dbReference type="InterPro" id="IPR045031">
    <property type="entry name" value="DHP_synth-like"/>
</dbReference>
<dbReference type="InterPro" id="IPR006390">
    <property type="entry name" value="DHP_synth_dom"/>
</dbReference>
<dbReference type="InterPro" id="IPR011005">
    <property type="entry name" value="Dihydropteroate_synth-like_sf"/>
</dbReference>
<dbReference type="InterPro" id="IPR000489">
    <property type="entry name" value="Pterin-binding_dom"/>
</dbReference>
<dbReference type="NCBIfam" id="TIGR01496">
    <property type="entry name" value="DHPS"/>
    <property type="match status" value="1"/>
</dbReference>
<dbReference type="PANTHER" id="PTHR20941">
    <property type="entry name" value="FOLATE SYNTHESIS PROTEINS"/>
    <property type="match status" value="1"/>
</dbReference>
<dbReference type="PANTHER" id="PTHR20941:SF1">
    <property type="entry name" value="FOLIC ACID SYNTHESIS PROTEIN FOL1"/>
    <property type="match status" value="1"/>
</dbReference>
<dbReference type="Pfam" id="PF00809">
    <property type="entry name" value="Pterin_bind"/>
    <property type="match status" value="1"/>
</dbReference>
<dbReference type="SUPFAM" id="SSF51717">
    <property type="entry name" value="Dihydropteroate synthetase-like"/>
    <property type="match status" value="1"/>
</dbReference>
<dbReference type="PROSITE" id="PS00792">
    <property type="entry name" value="DHPS_1"/>
    <property type="match status" value="1"/>
</dbReference>
<dbReference type="PROSITE" id="PS00793">
    <property type="entry name" value="DHPS_2"/>
    <property type="match status" value="1"/>
</dbReference>
<dbReference type="PROSITE" id="PS50972">
    <property type="entry name" value="PTERIN_BINDING"/>
    <property type="match status" value="1"/>
</dbReference>
<sequence>MSSKANHAKTVICGIINVTPDSFSDGGQFFALEQALQQARKLIAEGASMLDIGGESTRPGSSYVEIEEEIQRVVPVIKAIRKESDVLISIDTWKSQVAEAALAAGADLVNDITGLMGDEKMPHVVAEARAQVVIMFNPVMARPQHPSSLIFPHFGFGQAFTEEELADFETLPIEELMEAFFERALARAAEAGIAPENILLDPGIGFGLTKKENLLLLRDLDKLHQKGYPIFLGVSRKRFVINILEENGFEVNPETELGFRNRDTASAHVTSIAARQGVEVVRVHDVASHRMAVEIASAIRLADEAENLDLKQYK</sequence>
<comment type="function">
    <text evidence="4">Catalyzes the condensation of para-aminobenzoate (pABA) with 6-hydroxymethyl-7,8-dihydropterin diphosphate (DHPt-PP) to form 7,8-dihydropteroate, the immediate precursor of folate derivatives.</text>
</comment>
<comment type="function">
    <text evidence="8 9">Is the target for the sulfonamide group of antimicrobial drugs. Sulfonamide drugs act as pABA analogs, they inhibit the reaction by acting as alternative substrates, leading to a 'dead end' sulfa-pterin product.</text>
</comment>
<comment type="catalytic activity">
    <reaction evidence="4">
        <text>(7,8-dihydropterin-6-yl)methyl diphosphate + 4-aminobenzoate = 7,8-dihydropteroate + diphosphate</text>
        <dbReference type="Rhea" id="RHEA:19949"/>
        <dbReference type="ChEBI" id="CHEBI:17836"/>
        <dbReference type="ChEBI" id="CHEBI:17839"/>
        <dbReference type="ChEBI" id="CHEBI:33019"/>
        <dbReference type="ChEBI" id="CHEBI:72950"/>
        <dbReference type="EC" id="2.5.1.15"/>
    </reaction>
</comment>
<comment type="cofactor">
    <cofactor evidence="2">
        <name>Mg(2+)</name>
        <dbReference type="ChEBI" id="CHEBI:18420"/>
    </cofactor>
</comment>
<comment type="activity regulation">
    <text evidence="4">Is potently inhibited by sulfonamides, with Ki values between 25 nM and 850 nM.</text>
</comment>
<comment type="pathway">
    <text>Cofactor biosynthesis; tetrahydrofolate biosynthesis; 7,8-dihydrofolate from 2-amino-4-hydroxy-6-hydroxymethyl-7,8-dihydropteridine diphosphate and 4-aminobenzoate: step 1/2.</text>
</comment>
<comment type="subunit">
    <text evidence="5">Homodimer.</text>
</comment>
<comment type="miscellaneous">
    <text evidence="4 5">Reaction proceeds via an ordered binding mechanism, with DHPPP binding to the enzyme first, inducing a structural change which forms the pABA-binding site.</text>
</comment>
<comment type="miscellaneous">
    <text evidence="9">One or two residue insertions within this gene are responsible for sulfonamide resistance in streptococcal clinical isolates. Sulfonamide-resistance mutations in the second loop region have a drastic effect on pABA binding.</text>
</comment>
<comment type="similarity">
    <text evidence="7">Belongs to the DHPS family.</text>
</comment>